<keyword id="KW-0963">Cytoplasm</keyword>
<keyword id="KW-0489">Methyltransferase</keyword>
<keyword id="KW-0694">RNA-binding</keyword>
<keyword id="KW-0698">rRNA processing</keyword>
<keyword id="KW-0949">S-adenosyl-L-methionine</keyword>
<keyword id="KW-0808">Transferase</keyword>
<feature type="chain" id="PRO_0000366813" description="Ribosomal RNA large subunit methyltransferase K/L">
    <location>
        <begin position="1"/>
        <end position="702"/>
    </location>
</feature>
<feature type="domain" description="THUMP" evidence="1">
    <location>
        <begin position="43"/>
        <end position="154"/>
    </location>
</feature>
<protein>
    <recommendedName>
        <fullName evidence="1">Ribosomal RNA large subunit methyltransferase K/L</fullName>
    </recommendedName>
    <domain>
        <recommendedName>
            <fullName evidence="1">23S rRNA m2G2445 methyltransferase</fullName>
            <ecNumber evidence="1">2.1.1.173</ecNumber>
        </recommendedName>
        <alternativeName>
            <fullName evidence="1">rRNA (guanine-N(2)-)-methyltransferase RlmL</fullName>
        </alternativeName>
    </domain>
    <domain>
        <recommendedName>
            <fullName evidence="1">23S rRNA m7G2069 methyltransferase</fullName>
            <ecNumber evidence="1">2.1.1.264</ecNumber>
        </recommendedName>
        <alternativeName>
            <fullName evidence="1">rRNA (guanine-N(7)-)-methyltransferase RlmK</fullName>
        </alternativeName>
    </domain>
</protein>
<organism>
    <name type="scientific">Salmonella paratyphi A (strain AKU_12601)</name>
    <dbReference type="NCBI Taxonomy" id="554290"/>
    <lineage>
        <taxon>Bacteria</taxon>
        <taxon>Pseudomonadati</taxon>
        <taxon>Pseudomonadota</taxon>
        <taxon>Gammaproteobacteria</taxon>
        <taxon>Enterobacterales</taxon>
        <taxon>Enterobacteriaceae</taxon>
        <taxon>Salmonella</taxon>
    </lineage>
</organism>
<proteinExistence type="inferred from homology"/>
<gene>
    <name evidence="1" type="primary">rlmL</name>
    <name type="ordered locus">SSPA1662</name>
</gene>
<name>RLMKL_SALPK</name>
<sequence length="702" mass="78849">MNSLFASTARGLEELLKTELEKLGAVGCQVVQGGVHFQGDTRLIYQSLMWSRLASRIILPMGECKVYSDLDLYLGVQAINWTEIFNPGATFAVHFSGLNDTIRNSQYGAMKVKDAIVDAFTRKNLPRPNVDRESPDLRINVWLNKETASIALDLSGDGLHLRGYRDRTGLAPIKETLAAAIVMRSGWQPGTPLLDPMCGSGTLLIEAAMWATDRAPGLHRGHWGFSGWAQHDETIWQEVKAEAQTRARKGLAEYSSHFYGSDSDARVIERARSNARRAGIGELITFEVKDVAQLSNPLPKGPYGTVISNPPYGERLDSEPALIALHSLLGRTMKNQFGGWNLSLFSASPDLLGSLQLRADKQFKAKNGPLDCVQKNYHIAETTADSKPATVAEDYANRLRKNLKKLEKWARQEGIECYRLYDADLPEYNVAVDRYGDWAVIQEYAPPKTVDAQKARQRLFDIIAATLSVLGIPPNKLVLKTRERQKGKNQYQKMSEKGEFLEVSEYNARLWVNLTDYLDTGLFLDHRIARRMLGEMSKGKDFLNLFSYTGSASVHAGLGGARSTTTVDMSRTYLEWAERNLRLNGLSGRAHRLIQADCLGWLREANEQFDLIFIDPPTFSNSKRMEESFDVQRDHVALMKDLKRLLRKGGTIMFSNNKRGFRMDLEGLAELGLTAQEITQKTLSPDFARNRQIHNCWLIRAA</sequence>
<accession>B5BBL9</accession>
<comment type="function">
    <text evidence="1">Specifically methylates the guanine in position 2445 (m2G2445) and the guanine in position 2069 (m7G2069) of 23S rRNA.</text>
</comment>
<comment type="catalytic activity">
    <reaction evidence="1">
        <text>guanosine(2445) in 23S rRNA + S-adenosyl-L-methionine = N(2)-methylguanosine(2445) in 23S rRNA + S-adenosyl-L-homocysteine + H(+)</text>
        <dbReference type="Rhea" id="RHEA:42740"/>
        <dbReference type="Rhea" id="RHEA-COMP:10215"/>
        <dbReference type="Rhea" id="RHEA-COMP:10216"/>
        <dbReference type="ChEBI" id="CHEBI:15378"/>
        <dbReference type="ChEBI" id="CHEBI:57856"/>
        <dbReference type="ChEBI" id="CHEBI:59789"/>
        <dbReference type="ChEBI" id="CHEBI:74269"/>
        <dbReference type="ChEBI" id="CHEBI:74481"/>
        <dbReference type="EC" id="2.1.1.173"/>
    </reaction>
</comment>
<comment type="catalytic activity">
    <reaction evidence="1">
        <text>guanosine(2069) in 23S rRNA + S-adenosyl-L-methionine = N(2)-methylguanosine(2069) in 23S rRNA + S-adenosyl-L-homocysteine + H(+)</text>
        <dbReference type="Rhea" id="RHEA:43772"/>
        <dbReference type="Rhea" id="RHEA-COMP:10688"/>
        <dbReference type="Rhea" id="RHEA-COMP:10689"/>
        <dbReference type="ChEBI" id="CHEBI:15378"/>
        <dbReference type="ChEBI" id="CHEBI:57856"/>
        <dbReference type="ChEBI" id="CHEBI:59789"/>
        <dbReference type="ChEBI" id="CHEBI:74269"/>
        <dbReference type="ChEBI" id="CHEBI:74481"/>
        <dbReference type="EC" id="2.1.1.264"/>
    </reaction>
</comment>
<comment type="subcellular location">
    <subcellularLocation>
        <location evidence="1">Cytoplasm</location>
    </subcellularLocation>
</comment>
<comment type="similarity">
    <text evidence="1">Belongs to the methyltransferase superfamily. RlmKL family.</text>
</comment>
<evidence type="ECO:0000255" key="1">
    <source>
        <dbReference type="HAMAP-Rule" id="MF_01858"/>
    </source>
</evidence>
<dbReference type="EC" id="2.1.1.173" evidence="1"/>
<dbReference type="EC" id="2.1.1.264" evidence="1"/>
<dbReference type="EMBL" id="FM200053">
    <property type="protein sequence ID" value="CAR59854.1"/>
    <property type="molecule type" value="Genomic_DNA"/>
</dbReference>
<dbReference type="SMR" id="B5BBL9"/>
<dbReference type="KEGG" id="sek:SSPA1662"/>
<dbReference type="HOGENOM" id="CLU_014042_2_0_6"/>
<dbReference type="Proteomes" id="UP000001869">
    <property type="component" value="Chromosome"/>
</dbReference>
<dbReference type="GO" id="GO:0005737">
    <property type="term" value="C:cytoplasm"/>
    <property type="evidence" value="ECO:0007669"/>
    <property type="project" value="UniProtKB-SubCell"/>
</dbReference>
<dbReference type="GO" id="GO:0052915">
    <property type="term" value="F:23S rRNA (guanine(2445)-N(2))-methyltransferase activity"/>
    <property type="evidence" value="ECO:0007669"/>
    <property type="project" value="UniProtKB-UniRule"/>
</dbReference>
<dbReference type="GO" id="GO:0003723">
    <property type="term" value="F:RNA binding"/>
    <property type="evidence" value="ECO:0007669"/>
    <property type="project" value="UniProtKB-KW"/>
</dbReference>
<dbReference type="GO" id="GO:0070043">
    <property type="term" value="F:rRNA (guanine-N7-)-methyltransferase activity"/>
    <property type="evidence" value="ECO:0007669"/>
    <property type="project" value="UniProtKB-UniRule"/>
</dbReference>
<dbReference type="CDD" id="cd02440">
    <property type="entry name" value="AdoMet_MTases"/>
    <property type="match status" value="2"/>
</dbReference>
<dbReference type="CDD" id="cd11715">
    <property type="entry name" value="THUMP_AdoMetMT"/>
    <property type="match status" value="1"/>
</dbReference>
<dbReference type="FunFam" id="3.30.750.80:FF:000001">
    <property type="entry name" value="Ribosomal RNA large subunit methyltransferase K/L"/>
    <property type="match status" value="1"/>
</dbReference>
<dbReference type="FunFam" id="3.40.50.150:FF:000039">
    <property type="entry name" value="Ribosomal RNA large subunit methyltransferase K/L"/>
    <property type="match status" value="1"/>
</dbReference>
<dbReference type="Gene3D" id="3.30.2130.30">
    <property type="match status" value="1"/>
</dbReference>
<dbReference type="Gene3D" id="3.30.750.80">
    <property type="entry name" value="RNA methyltransferase domain (HRMD) like"/>
    <property type="match status" value="1"/>
</dbReference>
<dbReference type="Gene3D" id="3.40.50.150">
    <property type="entry name" value="Vaccinia Virus protein VP39"/>
    <property type="match status" value="2"/>
</dbReference>
<dbReference type="HAMAP" id="MF_01858">
    <property type="entry name" value="23SrRNA_methyltr_KL"/>
    <property type="match status" value="1"/>
</dbReference>
<dbReference type="InterPro" id="IPR017244">
    <property type="entry name" value="23SrRNA_methyltr_KL"/>
</dbReference>
<dbReference type="InterPro" id="IPR002052">
    <property type="entry name" value="DNA_methylase_N6_adenine_CS"/>
</dbReference>
<dbReference type="InterPro" id="IPR000241">
    <property type="entry name" value="RlmKL-like_Mtase"/>
</dbReference>
<dbReference type="InterPro" id="IPR053943">
    <property type="entry name" value="RlmKL-like_Mtase_CS"/>
</dbReference>
<dbReference type="InterPro" id="IPR054170">
    <property type="entry name" value="RlmL_1st"/>
</dbReference>
<dbReference type="InterPro" id="IPR019614">
    <property type="entry name" value="SAM-dep_methyl-trfase"/>
</dbReference>
<dbReference type="InterPro" id="IPR029063">
    <property type="entry name" value="SAM-dependent_MTases_sf"/>
</dbReference>
<dbReference type="InterPro" id="IPR004114">
    <property type="entry name" value="THUMP_dom"/>
</dbReference>
<dbReference type="NCBIfam" id="NF008748">
    <property type="entry name" value="PRK11783.1"/>
    <property type="match status" value="1"/>
</dbReference>
<dbReference type="PANTHER" id="PTHR47313">
    <property type="entry name" value="RIBOSOMAL RNA LARGE SUBUNIT METHYLTRANSFERASE K/L"/>
    <property type="match status" value="1"/>
</dbReference>
<dbReference type="PANTHER" id="PTHR47313:SF1">
    <property type="entry name" value="RIBOSOMAL RNA LARGE SUBUNIT METHYLTRANSFERASE K_L"/>
    <property type="match status" value="1"/>
</dbReference>
<dbReference type="Pfam" id="PF10672">
    <property type="entry name" value="Methyltrans_SAM"/>
    <property type="match status" value="1"/>
</dbReference>
<dbReference type="Pfam" id="PF22020">
    <property type="entry name" value="RlmL_1st"/>
    <property type="match status" value="1"/>
</dbReference>
<dbReference type="Pfam" id="PF02926">
    <property type="entry name" value="THUMP"/>
    <property type="match status" value="1"/>
</dbReference>
<dbReference type="Pfam" id="PF01170">
    <property type="entry name" value="UPF0020"/>
    <property type="match status" value="1"/>
</dbReference>
<dbReference type="PIRSF" id="PIRSF037618">
    <property type="entry name" value="RNA_Mtase_bacteria_prd"/>
    <property type="match status" value="1"/>
</dbReference>
<dbReference type="PRINTS" id="PR00507">
    <property type="entry name" value="N12N6MTFRASE"/>
</dbReference>
<dbReference type="SMART" id="SM00981">
    <property type="entry name" value="THUMP"/>
    <property type="match status" value="1"/>
</dbReference>
<dbReference type="SUPFAM" id="SSF53335">
    <property type="entry name" value="S-adenosyl-L-methionine-dependent methyltransferases"/>
    <property type="match status" value="2"/>
</dbReference>
<dbReference type="PROSITE" id="PS51165">
    <property type="entry name" value="THUMP"/>
    <property type="match status" value="1"/>
</dbReference>
<dbReference type="PROSITE" id="PS01261">
    <property type="entry name" value="UPF0020"/>
    <property type="match status" value="1"/>
</dbReference>
<reference key="1">
    <citation type="journal article" date="2009" name="BMC Genomics">
        <title>Pseudogene accumulation in the evolutionary histories of Salmonella enterica serovars Paratyphi A and Typhi.</title>
        <authorList>
            <person name="Holt K.E."/>
            <person name="Thomson N.R."/>
            <person name="Wain J."/>
            <person name="Langridge G.C."/>
            <person name="Hasan R."/>
            <person name="Bhutta Z.A."/>
            <person name="Quail M.A."/>
            <person name="Norbertczak H."/>
            <person name="Walker D."/>
            <person name="Simmonds M."/>
            <person name="White B."/>
            <person name="Bason N."/>
            <person name="Mungall K."/>
            <person name="Dougan G."/>
            <person name="Parkhill J."/>
        </authorList>
    </citation>
    <scope>NUCLEOTIDE SEQUENCE [LARGE SCALE GENOMIC DNA]</scope>
    <source>
        <strain>AKU_12601</strain>
    </source>
</reference>